<sequence length="368" mass="40980">MKAVHFGAGNIGRGFIGYILADNNVKVTFADVNEEIINALAHDHQYDVILADESKTTTRVNNVDAINSMQPSEALKQAILEGDIITTAVGVNILPIIAKSFAPFLKEKTNHVNIVACENAIMATDTLKKAVLDITGPLGNNIHFANSAVDRIVPLQKNENILDVMVEPFYEWVVEKDAWYGPELNHIKYVDDLTPYIERKLLTVNTGHAYLAYAGKFADKATVLDAVKDSSIEAGLRRVLAETSQYITNEFDFTEAEQAGYVEKIIDRFNNSYLSDEVTRVGRGTLRKIGPKDRIIKPLTYLYNKDLERTGLLNTAALLLKYDDTADQETVEKNNYIKEHGLKAFLSEYAKVDDGLADEIIEAYNSLS</sequence>
<keyword id="KW-0520">NAD</keyword>
<keyword id="KW-0560">Oxidoreductase</keyword>
<reference key="1">
    <citation type="journal article" date="2007" name="PLoS ONE">
        <title>Molecular correlates of host specialization in Staphylococcus aureus.</title>
        <authorList>
            <person name="Herron-Olson L."/>
            <person name="Fitzgerald J.R."/>
            <person name="Musser J.M."/>
            <person name="Kapur V."/>
        </authorList>
    </citation>
    <scope>NUCLEOTIDE SEQUENCE [LARGE SCALE GENOMIC DNA]</scope>
    <source>
        <strain>bovine RF122 / ET3-1</strain>
    </source>
</reference>
<accession>Q2YYE8</accession>
<dbReference type="EC" id="1.1.1.17" evidence="1"/>
<dbReference type="EMBL" id="AJ938182">
    <property type="protein sequence ID" value="CAI81728.1"/>
    <property type="molecule type" value="Genomic_DNA"/>
</dbReference>
<dbReference type="RefSeq" id="WP_000648732.1">
    <property type="nucleotide sequence ID" value="NC_007622.1"/>
</dbReference>
<dbReference type="SMR" id="Q2YYE8"/>
<dbReference type="KEGG" id="sab:SAB2039"/>
<dbReference type="HOGENOM" id="CLU_036089_2_0_9"/>
<dbReference type="GO" id="GO:0005829">
    <property type="term" value="C:cytosol"/>
    <property type="evidence" value="ECO:0007669"/>
    <property type="project" value="TreeGrafter"/>
</dbReference>
<dbReference type="GO" id="GO:0008926">
    <property type="term" value="F:mannitol-1-phosphate 5-dehydrogenase activity"/>
    <property type="evidence" value="ECO:0007669"/>
    <property type="project" value="UniProtKB-UniRule"/>
</dbReference>
<dbReference type="GO" id="GO:0019592">
    <property type="term" value="P:mannitol catabolic process"/>
    <property type="evidence" value="ECO:0007669"/>
    <property type="project" value="TreeGrafter"/>
</dbReference>
<dbReference type="FunFam" id="3.40.50.720:FF:000316">
    <property type="entry name" value="Mannitol-1-phosphate 5-dehydrogenase"/>
    <property type="match status" value="1"/>
</dbReference>
<dbReference type="Gene3D" id="1.10.1040.10">
    <property type="entry name" value="N-(1-d-carboxylethyl)-l-norvaline Dehydrogenase, domain 2"/>
    <property type="match status" value="1"/>
</dbReference>
<dbReference type="Gene3D" id="3.40.50.720">
    <property type="entry name" value="NAD(P)-binding Rossmann-like Domain"/>
    <property type="match status" value="1"/>
</dbReference>
<dbReference type="HAMAP" id="MF_00196">
    <property type="entry name" value="Mannitol_dehydrog"/>
    <property type="match status" value="1"/>
</dbReference>
<dbReference type="InterPro" id="IPR008927">
    <property type="entry name" value="6-PGluconate_DH-like_C_sf"/>
</dbReference>
<dbReference type="InterPro" id="IPR013328">
    <property type="entry name" value="6PGD_dom2"/>
</dbReference>
<dbReference type="InterPro" id="IPR023028">
    <property type="entry name" value="Mannitol_1_phos_5_DH"/>
</dbReference>
<dbReference type="InterPro" id="IPR000669">
    <property type="entry name" value="Mannitol_DH"/>
</dbReference>
<dbReference type="InterPro" id="IPR013118">
    <property type="entry name" value="Mannitol_DH_C"/>
</dbReference>
<dbReference type="InterPro" id="IPR023027">
    <property type="entry name" value="Mannitol_DH_CS"/>
</dbReference>
<dbReference type="InterPro" id="IPR013131">
    <property type="entry name" value="Mannitol_DH_N"/>
</dbReference>
<dbReference type="InterPro" id="IPR036291">
    <property type="entry name" value="NAD(P)-bd_dom_sf"/>
</dbReference>
<dbReference type="NCBIfam" id="NF002645">
    <property type="entry name" value="PRK02318.1-1"/>
    <property type="match status" value="1"/>
</dbReference>
<dbReference type="NCBIfam" id="NF002652">
    <property type="entry name" value="PRK02318.2-5"/>
    <property type="match status" value="1"/>
</dbReference>
<dbReference type="PANTHER" id="PTHR30524:SF0">
    <property type="entry name" value="ALTRONATE OXIDOREDUCTASE-RELATED"/>
    <property type="match status" value="1"/>
</dbReference>
<dbReference type="PANTHER" id="PTHR30524">
    <property type="entry name" value="MANNITOL-1-PHOSPHATE 5-DEHYDROGENASE"/>
    <property type="match status" value="1"/>
</dbReference>
<dbReference type="Pfam" id="PF01232">
    <property type="entry name" value="Mannitol_dh"/>
    <property type="match status" value="1"/>
</dbReference>
<dbReference type="Pfam" id="PF08125">
    <property type="entry name" value="Mannitol_dh_C"/>
    <property type="match status" value="1"/>
</dbReference>
<dbReference type="PRINTS" id="PR00084">
    <property type="entry name" value="MTLDHDRGNASE"/>
</dbReference>
<dbReference type="SUPFAM" id="SSF48179">
    <property type="entry name" value="6-phosphogluconate dehydrogenase C-terminal domain-like"/>
    <property type="match status" value="1"/>
</dbReference>
<dbReference type="SUPFAM" id="SSF51735">
    <property type="entry name" value="NAD(P)-binding Rossmann-fold domains"/>
    <property type="match status" value="1"/>
</dbReference>
<dbReference type="PROSITE" id="PS00974">
    <property type="entry name" value="MANNITOL_DHGENASE"/>
    <property type="match status" value="1"/>
</dbReference>
<protein>
    <recommendedName>
        <fullName evidence="1">Mannitol-1-phosphate 5-dehydrogenase</fullName>
        <ecNumber evidence="1">1.1.1.17</ecNumber>
    </recommendedName>
</protein>
<comment type="catalytic activity">
    <reaction evidence="1">
        <text>D-mannitol 1-phosphate + NAD(+) = beta-D-fructose 6-phosphate + NADH + H(+)</text>
        <dbReference type="Rhea" id="RHEA:19661"/>
        <dbReference type="ChEBI" id="CHEBI:15378"/>
        <dbReference type="ChEBI" id="CHEBI:57540"/>
        <dbReference type="ChEBI" id="CHEBI:57634"/>
        <dbReference type="ChEBI" id="CHEBI:57945"/>
        <dbReference type="ChEBI" id="CHEBI:61381"/>
        <dbReference type="EC" id="1.1.1.17"/>
    </reaction>
</comment>
<comment type="similarity">
    <text evidence="1">Belongs to the mannitol dehydrogenase family.</text>
</comment>
<organism>
    <name type="scientific">Staphylococcus aureus (strain bovine RF122 / ET3-1)</name>
    <dbReference type="NCBI Taxonomy" id="273036"/>
    <lineage>
        <taxon>Bacteria</taxon>
        <taxon>Bacillati</taxon>
        <taxon>Bacillota</taxon>
        <taxon>Bacilli</taxon>
        <taxon>Bacillales</taxon>
        <taxon>Staphylococcaceae</taxon>
        <taxon>Staphylococcus</taxon>
    </lineage>
</organism>
<gene>
    <name evidence="1" type="primary">mtlD</name>
    <name type="ordered locus">SAB2039</name>
</gene>
<proteinExistence type="inferred from homology"/>
<name>MTLD_STAAB</name>
<feature type="chain" id="PRO_1000011815" description="Mannitol-1-phosphate 5-dehydrogenase">
    <location>
        <begin position="1"/>
        <end position="368"/>
    </location>
</feature>
<feature type="binding site" evidence="1">
    <location>
        <begin position="3"/>
        <end position="14"/>
    </location>
    <ligand>
        <name>NAD(+)</name>
        <dbReference type="ChEBI" id="CHEBI:57540"/>
    </ligand>
</feature>
<evidence type="ECO:0000255" key="1">
    <source>
        <dbReference type="HAMAP-Rule" id="MF_00196"/>
    </source>
</evidence>